<sequence>MMKKPVVIGLAVVVLAAVVAGGYWWYQSRQDNGLTLYGNVDIRTVNLSFRVGGRVESLAVDEGDAIKAGQVLGELDHKPYEIALMQAKAGVSVAQAQYDLMLAGYRDEEIAQAAAAVKQAQAAYDYAQNFYNRQQGLWKSRTISANDLENARSSRDQAQATLKSAQDKLRQYRSGNREQDIAQAKASLEQAQAQLAQAELNLQDSTLIAPSDGTLLTRAVEPGTVLNEGGTVFTVSLTRPVWVRAYVDERNLDQAQPGRKVLLYTDGRPDKPYHGQIGFVSPTAEFTPKTVETPDLRTDLVYRLRIVVTDADDALRQGMPVTVQFGDEAGHE</sequence>
<keyword id="KW-0175">Coiled coil</keyword>
<keyword id="KW-0574">Periplasm</keyword>
<keyword id="KW-0732">Signal</keyword>
<protein>
    <recommendedName>
        <fullName evidence="1">UPF0194 membrane protein YbhG</fullName>
    </recommendedName>
</protein>
<name>YBHG_ECOLU</name>
<dbReference type="EMBL" id="CU928163">
    <property type="protein sequence ID" value="CAR12148.1"/>
    <property type="molecule type" value="Genomic_DNA"/>
</dbReference>
<dbReference type="RefSeq" id="YP_002411692.1">
    <property type="nucleotide sequence ID" value="NC_011751.1"/>
</dbReference>
<dbReference type="SMR" id="B7NA95"/>
<dbReference type="STRING" id="585056.ECUMN_0939"/>
<dbReference type="KEGG" id="eum:ECUMN_0939"/>
<dbReference type="PATRIC" id="fig|585056.7.peg.1133"/>
<dbReference type="HOGENOM" id="CLU_018816_6_3_6"/>
<dbReference type="Proteomes" id="UP000007097">
    <property type="component" value="Chromosome"/>
</dbReference>
<dbReference type="GO" id="GO:0042597">
    <property type="term" value="C:periplasmic space"/>
    <property type="evidence" value="ECO:0007669"/>
    <property type="project" value="UniProtKB-SubCell"/>
</dbReference>
<dbReference type="FunFam" id="1.10.287.470:FF:000004">
    <property type="entry name" value="UPF0194 membrane protein YbhG"/>
    <property type="match status" value="1"/>
</dbReference>
<dbReference type="FunFam" id="2.40.30.170:FF:000005">
    <property type="entry name" value="UPF0194 membrane protein YbhG"/>
    <property type="match status" value="1"/>
</dbReference>
<dbReference type="FunFam" id="2.40.50.100:FF:000025">
    <property type="entry name" value="UPF0194 membrane protein YbhG"/>
    <property type="match status" value="1"/>
</dbReference>
<dbReference type="Gene3D" id="2.40.30.170">
    <property type="match status" value="1"/>
</dbReference>
<dbReference type="Gene3D" id="2.40.50.100">
    <property type="match status" value="2"/>
</dbReference>
<dbReference type="Gene3D" id="1.10.287.470">
    <property type="entry name" value="Helix hairpin bin"/>
    <property type="match status" value="1"/>
</dbReference>
<dbReference type="HAMAP" id="MF_01304">
    <property type="entry name" value="UPF0194"/>
    <property type="match status" value="1"/>
</dbReference>
<dbReference type="InterPro" id="IPR032317">
    <property type="entry name" value="CusB_D23"/>
</dbReference>
<dbReference type="InterPro" id="IPR022936">
    <property type="entry name" value="UPF0194_membrane_YbhG"/>
</dbReference>
<dbReference type="InterPro" id="IPR050465">
    <property type="entry name" value="UPF0194_transport"/>
</dbReference>
<dbReference type="NCBIfam" id="NF002939">
    <property type="entry name" value="PRK03598.1"/>
    <property type="match status" value="1"/>
</dbReference>
<dbReference type="PANTHER" id="PTHR32347">
    <property type="entry name" value="EFFLUX SYSTEM COMPONENT YKNX-RELATED"/>
    <property type="match status" value="1"/>
</dbReference>
<dbReference type="PANTHER" id="PTHR32347:SF29">
    <property type="entry name" value="UPF0194 MEMBRANE PROTEIN YBHG"/>
    <property type="match status" value="1"/>
</dbReference>
<dbReference type="Pfam" id="PF16576">
    <property type="entry name" value="HlyD_D23"/>
    <property type="match status" value="1"/>
</dbReference>
<dbReference type="SUPFAM" id="SSF111369">
    <property type="entry name" value="HlyD-like secretion proteins"/>
    <property type="match status" value="2"/>
</dbReference>
<dbReference type="SUPFAM" id="SSF56954">
    <property type="entry name" value="Outer membrane efflux proteins (OEP)"/>
    <property type="match status" value="1"/>
</dbReference>
<comment type="subcellular location">
    <subcellularLocation>
        <location evidence="1">Periplasm</location>
    </subcellularLocation>
</comment>
<comment type="similarity">
    <text evidence="1">Belongs to the UPF0194 family.</text>
</comment>
<proteinExistence type="inferred from homology"/>
<reference key="1">
    <citation type="journal article" date="2009" name="PLoS Genet.">
        <title>Organised genome dynamics in the Escherichia coli species results in highly diverse adaptive paths.</title>
        <authorList>
            <person name="Touchon M."/>
            <person name="Hoede C."/>
            <person name="Tenaillon O."/>
            <person name="Barbe V."/>
            <person name="Baeriswyl S."/>
            <person name="Bidet P."/>
            <person name="Bingen E."/>
            <person name="Bonacorsi S."/>
            <person name="Bouchier C."/>
            <person name="Bouvet O."/>
            <person name="Calteau A."/>
            <person name="Chiapello H."/>
            <person name="Clermont O."/>
            <person name="Cruveiller S."/>
            <person name="Danchin A."/>
            <person name="Diard M."/>
            <person name="Dossat C."/>
            <person name="Karoui M.E."/>
            <person name="Frapy E."/>
            <person name="Garry L."/>
            <person name="Ghigo J.M."/>
            <person name="Gilles A.M."/>
            <person name="Johnson J."/>
            <person name="Le Bouguenec C."/>
            <person name="Lescat M."/>
            <person name="Mangenot S."/>
            <person name="Martinez-Jehanne V."/>
            <person name="Matic I."/>
            <person name="Nassif X."/>
            <person name="Oztas S."/>
            <person name="Petit M.A."/>
            <person name="Pichon C."/>
            <person name="Rouy Z."/>
            <person name="Ruf C.S."/>
            <person name="Schneider D."/>
            <person name="Tourret J."/>
            <person name="Vacherie B."/>
            <person name="Vallenet D."/>
            <person name="Medigue C."/>
            <person name="Rocha E.P.C."/>
            <person name="Denamur E."/>
        </authorList>
    </citation>
    <scope>NUCLEOTIDE SEQUENCE [LARGE SCALE GENOMIC DNA]</scope>
    <source>
        <strain>UMN026 / ExPEC</strain>
    </source>
</reference>
<organism>
    <name type="scientific">Escherichia coli O17:K52:H18 (strain UMN026 / ExPEC)</name>
    <dbReference type="NCBI Taxonomy" id="585056"/>
    <lineage>
        <taxon>Bacteria</taxon>
        <taxon>Pseudomonadati</taxon>
        <taxon>Pseudomonadota</taxon>
        <taxon>Gammaproteobacteria</taxon>
        <taxon>Enterobacterales</taxon>
        <taxon>Enterobacteriaceae</taxon>
        <taxon>Escherichia</taxon>
    </lineage>
</organism>
<feature type="signal peptide" evidence="1">
    <location>
        <begin position="1"/>
        <end position="16"/>
    </location>
</feature>
<feature type="chain" id="PRO_1000140653" description="UPF0194 membrane protein YbhG">
    <location>
        <begin position="17"/>
        <end position="332"/>
    </location>
</feature>
<feature type="coiled-coil region" evidence="1">
    <location>
        <begin position="108"/>
        <end position="209"/>
    </location>
</feature>
<accession>B7NA95</accession>
<gene>
    <name evidence="1" type="primary">ybhG</name>
    <name type="ordered locus">ECUMN_0939</name>
</gene>
<evidence type="ECO:0000255" key="1">
    <source>
        <dbReference type="HAMAP-Rule" id="MF_01304"/>
    </source>
</evidence>